<feature type="chain" id="PRO_1000007955" description="S-adenosylmethionine synthase">
    <location>
        <begin position="1"/>
        <end position="383"/>
    </location>
</feature>
<feature type="region of interest" description="Flexible loop" evidence="1">
    <location>
        <begin position="99"/>
        <end position="109"/>
    </location>
</feature>
<feature type="binding site" description="in other chain" evidence="1">
    <location>
        <position position="15"/>
    </location>
    <ligand>
        <name>ATP</name>
        <dbReference type="ChEBI" id="CHEBI:30616"/>
        <note>ligand shared between two neighboring subunits</note>
    </ligand>
</feature>
<feature type="binding site" evidence="1">
    <location>
        <position position="17"/>
    </location>
    <ligand>
        <name>Mg(2+)</name>
        <dbReference type="ChEBI" id="CHEBI:18420"/>
    </ligand>
</feature>
<feature type="binding site" evidence="1">
    <location>
        <position position="43"/>
    </location>
    <ligand>
        <name>K(+)</name>
        <dbReference type="ChEBI" id="CHEBI:29103"/>
    </ligand>
</feature>
<feature type="binding site" description="in other chain" evidence="1">
    <location>
        <position position="56"/>
    </location>
    <ligand>
        <name>L-methionine</name>
        <dbReference type="ChEBI" id="CHEBI:57844"/>
        <note>ligand shared between two neighboring subunits</note>
    </ligand>
</feature>
<feature type="binding site" description="in other chain" evidence="1">
    <location>
        <position position="99"/>
    </location>
    <ligand>
        <name>L-methionine</name>
        <dbReference type="ChEBI" id="CHEBI:57844"/>
        <note>ligand shared between two neighboring subunits</note>
    </ligand>
</feature>
<feature type="binding site" description="in other chain" evidence="1">
    <location>
        <begin position="164"/>
        <end position="166"/>
    </location>
    <ligand>
        <name>ATP</name>
        <dbReference type="ChEBI" id="CHEBI:30616"/>
        <note>ligand shared between two neighboring subunits</note>
    </ligand>
</feature>
<feature type="binding site" description="in other chain" evidence="1">
    <location>
        <begin position="230"/>
        <end position="231"/>
    </location>
    <ligand>
        <name>ATP</name>
        <dbReference type="ChEBI" id="CHEBI:30616"/>
        <note>ligand shared between two neighboring subunits</note>
    </ligand>
</feature>
<feature type="binding site" evidence="1">
    <location>
        <position position="239"/>
    </location>
    <ligand>
        <name>ATP</name>
        <dbReference type="ChEBI" id="CHEBI:30616"/>
        <note>ligand shared between two neighboring subunits</note>
    </ligand>
</feature>
<feature type="binding site" evidence="1">
    <location>
        <position position="239"/>
    </location>
    <ligand>
        <name>L-methionine</name>
        <dbReference type="ChEBI" id="CHEBI:57844"/>
        <note>ligand shared between two neighboring subunits</note>
    </ligand>
</feature>
<feature type="binding site" description="in other chain" evidence="1">
    <location>
        <begin position="245"/>
        <end position="246"/>
    </location>
    <ligand>
        <name>ATP</name>
        <dbReference type="ChEBI" id="CHEBI:30616"/>
        <note>ligand shared between two neighboring subunits</note>
    </ligand>
</feature>
<feature type="binding site" evidence="1">
    <location>
        <position position="262"/>
    </location>
    <ligand>
        <name>ATP</name>
        <dbReference type="ChEBI" id="CHEBI:30616"/>
        <note>ligand shared between two neighboring subunits</note>
    </ligand>
</feature>
<feature type="binding site" evidence="1">
    <location>
        <position position="266"/>
    </location>
    <ligand>
        <name>ATP</name>
        <dbReference type="ChEBI" id="CHEBI:30616"/>
        <note>ligand shared between two neighboring subunits</note>
    </ligand>
</feature>
<feature type="binding site" description="in other chain" evidence="1">
    <location>
        <position position="270"/>
    </location>
    <ligand>
        <name>L-methionine</name>
        <dbReference type="ChEBI" id="CHEBI:57844"/>
        <note>ligand shared between two neighboring subunits</note>
    </ligand>
</feature>
<gene>
    <name evidence="1" type="primary">metK</name>
    <name type="ordered locus">Sputcn32_0871</name>
</gene>
<proteinExistence type="inferred from homology"/>
<organism>
    <name type="scientific">Shewanella putrefaciens (strain CN-32 / ATCC BAA-453)</name>
    <dbReference type="NCBI Taxonomy" id="319224"/>
    <lineage>
        <taxon>Bacteria</taxon>
        <taxon>Pseudomonadati</taxon>
        <taxon>Pseudomonadota</taxon>
        <taxon>Gammaproteobacteria</taxon>
        <taxon>Alteromonadales</taxon>
        <taxon>Shewanellaceae</taxon>
        <taxon>Shewanella</taxon>
    </lineage>
</organism>
<keyword id="KW-0067">ATP-binding</keyword>
<keyword id="KW-0963">Cytoplasm</keyword>
<keyword id="KW-0460">Magnesium</keyword>
<keyword id="KW-0479">Metal-binding</keyword>
<keyword id="KW-0547">Nucleotide-binding</keyword>
<keyword id="KW-0554">One-carbon metabolism</keyword>
<keyword id="KW-0630">Potassium</keyword>
<keyword id="KW-0808">Transferase</keyword>
<reference key="1">
    <citation type="submission" date="2007-04" db="EMBL/GenBank/DDBJ databases">
        <title>Complete sequence of Shewanella putrefaciens CN-32.</title>
        <authorList>
            <consortium name="US DOE Joint Genome Institute"/>
            <person name="Copeland A."/>
            <person name="Lucas S."/>
            <person name="Lapidus A."/>
            <person name="Barry K."/>
            <person name="Detter J.C."/>
            <person name="Glavina del Rio T."/>
            <person name="Hammon N."/>
            <person name="Israni S."/>
            <person name="Dalin E."/>
            <person name="Tice H."/>
            <person name="Pitluck S."/>
            <person name="Chain P."/>
            <person name="Malfatti S."/>
            <person name="Shin M."/>
            <person name="Vergez L."/>
            <person name="Schmutz J."/>
            <person name="Larimer F."/>
            <person name="Land M."/>
            <person name="Hauser L."/>
            <person name="Kyrpides N."/>
            <person name="Mikhailova N."/>
            <person name="Romine M.F."/>
            <person name="Fredrickson J."/>
            <person name="Tiedje J."/>
            <person name="Richardson P."/>
        </authorList>
    </citation>
    <scope>NUCLEOTIDE SEQUENCE [LARGE SCALE GENOMIC DNA]</scope>
    <source>
        <strain>CN-32 / ATCC BAA-453</strain>
    </source>
</reference>
<accession>A4Y3R7</accession>
<name>METK_SHEPC</name>
<evidence type="ECO:0000255" key="1">
    <source>
        <dbReference type="HAMAP-Rule" id="MF_00086"/>
    </source>
</evidence>
<dbReference type="EC" id="2.5.1.6" evidence="1"/>
<dbReference type="EMBL" id="CP000681">
    <property type="protein sequence ID" value="ABP74600.1"/>
    <property type="molecule type" value="Genomic_DNA"/>
</dbReference>
<dbReference type="SMR" id="A4Y3R7"/>
<dbReference type="STRING" id="319224.Sputcn32_0871"/>
<dbReference type="KEGG" id="spc:Sputcn32_0871"/>
<dbReference type="eggNOG" id="COG0192">
    <property type="taxonomic scope" value="Bacteria"/>
</dbReference>
<dbReference type="HOGENOM" id="CLU_041802_1_1_6"/>
<dbReference type="UniPathway" id="UPA00315">
    <property type="reaction ID" value="UER00080"/>
</dbReference>
<dbReference type="GO" id="GO:0005737">
    <property type="term" value="C:cytoplasm"/>
    <property type="evidence" value="ECO:0007669"/>
    <property type="project" value="UniProtKB-SubCell"/>
</dbReference>
<dbReference type="GO" id="GO:0005524">
    <property type="term" value="F:ATP binding"/>
    <property type="evidence" value="ECO:0007669"/>
    <property type="project" value="UniProtKB-UniRule"/>
</dbReference>
<dbReference type="GO" id="GO:0000287">
    <property type="term" value="F:magnesium ion binding"/>
    <property type="evidence" value="ECO:0007669"/>
    <property type="project" value="UniProtKB-UniRule"/>
</dbReference>
<dbReference type="GO" id="GO:0004478">
    <property type="term" value="F:methionine adenosyltransferase activity"/>
    <property type="evidence" value="ECO:0007669"/>
    <property type="project" value="UniProtKB-UniRule"/>
</dbReference>
<dbReference type="GO" id="GO:0006730">
    <property type="term" value="P:one-carbon metabolic process"/>
    <property type="evidence" value="ECO:0007669"/>
    <property type="project" value="UniProtKB-KW"/>
</dbReference>
<dbReference type="GO" id="GO:0006556">
    <property type="term" value="P:S-adenosylmethionine biosynthetic process"/>
    <property type="evidence" value="ECO:0007669"/>
    <property type="project" value="UniProtKB-UniRule"/>
</dbReference>
<dbReference type="CDD" id="cd18079">
    <property type="entry name" value="S-AdoMet_synt"/>
    <property type="match status" value="1"/>
</dbReference>
<dbReference type="FunFam" id="3.30.300.10:FF:000001">
    <property type="entry name" value="S-adenosylmethionine synthase"/>
    <property type="match status" value="1"/>
</dbReference>
<dbReference type="FunFam" id="3.30.300.10:FF:000003">
    <property type="entry name" value="S-adenosylmethionine synthase"/>
    <property type="match status" value="1"/>
</dbReference>
<dbReference type="FunFam" id="3.30.300.10:FF:000004">
    <property type="entry name" value="S-adenosylmethionine synthase"/>
    <property type="match status" value="1"/>
</dbReference>
<dbReference type="Gene3D" id="3.30.300.10">
    <property type="match status" value="3"/>
</dbReference>
<dbReference type="HAMAP" id="MF_00086">
    <property type="entry name" value="S_AdoMet_synth1"/>
    <property type="match status" value="1"/>
</dbReference>
<dbReference type="InterPro" id="IPR022631">
    <property type="entry name" value="ADOMET_SYNTHASE_CS"/>
</dbReference>
<dbReference type="InterPro" id="IPR022630">
    <property type="entry name" value="S-AdoMet_synt_C"/>
</dbReference>
<dbReference type="InterPro" id="IPR022629">
    <property type="entry name" value="S-AdoMet_synt_central"/>
</dbReference>
<dbReference type="InterPro" id="IPR022628">
    <property type="entry name" value="S-AdoMet_synt_N"/>
</dbReference>
<dbReference type="InterPro" id="IPR002133">
    <property type="entry name" value="S-AdoMet_synthetase"/>
</dbReference>
<dbReference type="InterPro" id="IPR022636">
    <property type="entry name" value="S-AdoMet_synthetase_sfam"/>
</dbReference>
<dbReference type="NCBIfam" id="TIGR01034">
    <property type="entry name" value="metK"/>
    <property type="match status" value="1"/>
</dbReference>
<dbReference type="PANTHER" id="PTHR11964">
    <property type="entry name" value="S-ADENOSYLMETHIONINE SYNTHETASE"/>
    <property type="match status" value="1"/>
</dbReference>
<dbReference type="Pfam" id="PF02773">
    <property type="entry name" value="S-AdoMet_synt_C"/>
    <property type="match status" value="1"/>
</dbReference>
<dbReference type="Pfam" id="PF02772">
    <property type="entry name" value="S-AdoMet_synt_M"/>
    <property type="match status" value="1"/>
</dbReference>
<dbReference type="Pfam" id="PF00438">
    <property type="entry name" value="S-AdoMet_synt_N"/>
    <property type="match status" value="1"/>
</dbReference>
<dbReference type="PIRSF" id="PIRSF000497">
    <property type="entry name" value="MAT"/>
    <property type="match status" value="1"/>
</dbReference>
<dbReference type="SUPFAM" id="SSF55973">
    <property type="entry name" value="S-adenosylmethionine synthetase"/>
    <property type="match status" value="3"/>
</dbReference>
<dbReference type="PROSITE" id="PS00376">
    <property type="entry name" value="ADOMET_SYNTHASE_1"/>
    <property type="match status" value="1"/>
</dbReference>
<dbReference type="PROSITE" id="PS00377">
    <property type="entry name" value="ADOMET_SYNTHASE_2"/>
    <property type="match status" value="1"/>
</dbReference>
<comment type="function">
    <text evidence="1">Catalyzes the formation of S-adenosylmethionine (AdoMet) from methionine and ATP. The overall synthetic reaction is composed of two sequential steps, AdoMet formation and the subsequent tripolyphosphate hydrolysis which occurs prior to release of AdoMet from the enzyme.</text>
</comment>
<comment type="catalytic activity">
    <reaction evidence="1">
        <text>L-methionine + ATP + H2O = S-adenosyl-L-methionine + phosphate + diphosphate</text>
        <dbReference type="Rhea" id="RHEA:21080"/>
        <dbReference type="ChEBI" id="CHEBI:15377"/>
        <dbReference type="ChEBI" id="CHEBI:30616"/>
        <dbReference type="ChEBI" id="CHEBI:33019"/>
        <dbReference type="ChEBI" id="CHEBI:43474"/>
        <dbReference type="ChEBI" id="CHEBI:57844"/>
        <dbReference type="ChEBI" id="CHEBI:59789"/>
        <dbReference type="EC" id="2.5.1.6"/>
    </reaction>
</comment>
<comment type="cofactor">
    <cofactor evidence="1">
        <name>Mg(2+)</name>
        <dbReference type="ChEBI" id="CHEBI:18420"/>
    </cofactor>
    <text evidence="1">Binds 2 divalent ions per subunit.</text>
</comment>
<comment type="cofactor">
    <cofactor evidence="1">
        <name>K(+)</name>
        <dbReference type="ChEBI" id="CHEBI:29103"/>
    </cofactor>
    <text evidence="1">Binds 1 potassium ion per subunit.</text>
</comment>
<comment type="pathway">
    <text evidence="1">Amino-acid biosynthesis; S-adenosyl-L-methionine biosynthesis; S-adenosyl-L-methionine from L-methionine: step 1/1.</text>
</comment>
<comment type="subunit">
    <text evidence="1">Homotetramer; dimer of dimers.</text>
</comment>
<comment type="subcellular location">
    <subcellularLocation>
        <location evidence="1">Cytoplasm</location>
    </subcellularLocation>
</comment>
<comment type="similarity">
    <text evidence="1">Belongs to the AdoMet synthase family.</text>
</comment>
<sequence length="383" mass="41381">MAKHLFTSESVSEGHPDKIADQISDAVLDAILAQDPKARVACETYVKTGMVLVGGEVTTSAWVDIEELTRKTVREIGYTHSDMGFDADSCAVLNAIGKQSPDINQGVDRADPKEQGAGDQGLMFGYASNETEILMPAPITYAHALVKRQSEVRKNGTLPWLRPDAKSQVTFAYENNKIVGIDAIVLSTQHSPDIAQADLIEGVMETIIKPVLPAQWLSKDTKYFINPTGRFVIGGPMGDCGLTGRKIIVDTYGGMARHGGGAFSGKDPSKVDRSAAYAARYVAKNIVAAGLADRCELQVSYAIGVAEPTSISIETFGTGKVSEEVLIKLVRQHFDLRPYGLTEMLNLARPIYQATAAYGHFGRNEFPWEATDKAEALRADAGL</sequence>
<protein>
    <recommendedName>
        <fullName evidence="1">S-adenosylmethionine synthase</fullName>
        <shortName evidence="1">AdoMet synthase</shortName>
        <ecNumber evidence="1">2.5.1.6</ecNumber>
    </recommendedName>
    <alternativeName>
        <fullName evidence="1">MAT</fullName>
    </alternativeName>
    <alternativeName>
        <fullName evidence="1">Methionine adenosyltransferase</fullName>
    </alternativeName>
</protein>